<accession>P65595</accession>
<accession>Q99UR4</accession>
<evidence type="ECO:0000255" key="1">
    <source>
        <dbReference type="HAMAP-Rule" id="MF_01200"/>
    </source>
</evidence>
<sequence>MKDLPIIALDFESKEKVNQFLDLFDESLFVKVGMELFYQEGPQLINEIKERGHDVFLDLKLHDIPNTVGKAMEGLAKLNVDLVNVHAAGGVKMMSEAIKGLRKHNQHTKIIAVTQLTSTTEDMLRHEQNIQTSIEEAVLNYAKLANAAGLDGVVCSPLESRMLTEKLGTSFLKVTPGIRPKGASQDDQHRITTPEEARQLGSTHIVVGRPITQSDNPVESYHKIKESWLV</sequence>
<keyword id="KW-0210">Decarboxylase</keyword>
<keyword id="KW-0456">Lyase</keyword>
<keyword id="KW-0665">Pyrimidine biosynthesis</keyword>
<comment type="function">
    <text evidence="1">Catalyzes the decarboxylation of orotidine 5'-monophosphate (OMP) to uridine 5'-monophosphate (UMP).</text>
</comment>
<comment type="catalytic activity">
    <reaction evidence="1">
        <text>orotidine 5'-phosphate + H(+) = UMP + CO2</text>
        <dbReference type="Rhea" id="RHEA:11596"/>
        <dbReference type="ChEBI" id="CHEBI:15378"/>
        <dbReference type="ChEBI" id="CHEBI:16526"/>
        <dbReference type="ChEBI" id="CHEBI:57538"/>
        <dbReference type="ChEBI" id="CHEBI:57865"/>
        <dbReference type="EC" id="4.1.1.23"/>
    </reaction>
</comment>
<comment type="pathway">
    <text evidence="1">Pyrimidine metabolism; UMP biosynthesis via de novo pathway; UMP from orotate: step 2/2.</text>
</comment>
<comment type="subunit">
    <text evidence="1">Homodimer.</text>
</comment>
<comment type="similarity">
    <text evidence="1">Belongs to the OMP decarboxylase family. Type 1 subfamily.</text>
</comment>
<reference key="1">
    <citation type="journal article" date="2001" name="Lancet">
        <title>Whole genome sequencing of meticillin-resistant Staphylococcus aureus.</title>
        <authorList>
            <person name="Kuroda M."/>
            <person name="Ohta T."/>
            <person name="Uchiyama I."/>
            <person name="Baba T."/>
            <person name="Yuzawa H."/>
            <person name="Kobayashi I."/>
            <person name="Cui L."/>
            <person name="Oguchi A."/>
            <person name="Aoki K."/>
            <person name="Nagai Y."/>
            <person name="Lian J.-Q."/>
            <person name="Ito T."/>
            <person name="Kanamori M."/>
            <person name="Matsumaru H."/>
            <person name="Maruyama A."/>
            <person name="Murakami H."/>
            <person name="Hosoyama A."/>
            <person name="Mizutani-Ui Y."/>
            <person name="Takahashi N.K."/>
            <person name="Sawano T."/>
            <person name="Inoue R."/>
            <person name="Kaito C."/>
            <person name="Sekimizu K."/>
            <person name="Hirakawa H."/>
            <person name="Kuhara S."/>
            <person name="Goto S."/>
            <person name="Yabuzaki J."/>
            <person name="Kanehisa M."/>
            <person name="Yamashita A."/>
            <person name="Oshima K."/>
            <person name="Furuya K."/>
            <person name="Yoshino C."/>
            <person name="Shiba T."/>
            <person name="Hattori M."/>
            <person name="Ogasawara N."/>
            <person name="Hayashi H."/>
            <person name="Hiramatsu K."/>
        </authorList>
    </citation>
    <scope>NUCLEOTIDE SEQUENCE [LARGE SCALE GENOMIC DNA]</scope>
    <source>
        <strain>Mu50 / ATCC 700699</strain>
    </source>
</reference>
<feature type="chain" id="PRO_0000134575" description="Orotidine 5'-phosphate decarboxylase">
    <location>
        <begin position="1"/>
        <end position="230"/>
    </location>
</feature>
<feature type="active site" description="Proton donor" evidence="1">
    <location>
        <position position="60"/>
    </location>
</feature>
<feature type="binding site" evidence="1">
    <location>
        <position position="10"/>
    </location>
    <ligand>
        <name>substrate</name>
    </ligand>
</feature>
<feature type="binding site" evidence="1">
    <location>
        <position position="31"/>
    </location>
    <ligand>
        <name>substrate</name>
    </ligand>
</feature>
<feature type="binding site" evidence="1">
    <location>
        <begin position="58"/>
        <end position="67"/>
    </location>
    <ligand>
        <name>substrate</name>
    </ligand>
</feature>
<feature type="binding site" evidence="1">
    <location>
        <position position="117"/>
    </location>
    <ligand>
        <name>substrate</name>
    </ligand>
</feature>
<feature type="binding site" evidence="1">
    <location>
        <position position="179"/>
    </location>
    <ligand>
        <name>substrate</name>
    </ligand>
</feature>
<feature type="binding site" evidence="1">
    <location>
        <position position="188"/>
    </location>
    <ligand>
        <name>substrate</name>
    </ligand>
</feature>
<feature type="binding site" evidence="1">
    <location>
        <position position="208"/>
    </location>
    <ligand>
        <name>substrate</name>
    </ligand>
</feature>
<feature type="binding site" evidence="1">
    <location>
        <position position="209"/>
    </location>
    <ligand>
        <name>substrate</name>
    </ligand>
</feature>
<gene>
    <name evidence="1" type="primary">pyrF</name>
    <name type="ordered locus">SAV1204</name>
</gene>
<dbReference type="EC" id="4.1.1.23" evidence="1"/>
<dbReference type="EMBL" id="BA000017">
    <property type="protein sequence ID" value="BAB57366.1"/>
    <property type="molecule type" value="Genomic_DNA"/>
</dbReference>
<dbReference type="RefSeq" id="WP_000654067.1">
    <property type="nucleotide sequence ID" value="NC_002758.2"/>
</dbReference>
<dbReference type="SMR" id="P65595"/>
<dbReference type="KEGG" id="sav:SAV1204"/>
<dbReference type="HOGENOM" id="CLU_067069_1_1_9"/>
<dbReference type="PhylomeDB" id="P65595"/>
<dbReference type="UniPathway" id="UPA00070">
    <property type="reaction ID" value="UER00120"/>
</dbReference>
<dbReference type="Proteomes" id="UP000002481">
    <property type="component" value="Chromosome"/>
</dbReference>
<dbReference type="GO" id="GO:0005829">
    <property type="term" value="C:cytosol"/>
    <property type="evidence" value="ECO:0007669"/>
    <property type="project" value="TreeGrafter"/>
</dbReference>
<dbReference type="GO" id="GO:0004590">
    <property type="term" value="F:orotidine-5'-phosphate decarboxylase activity"/>
    <property type="evidence" value="ECO:0007669"/>
    <property type="project" value="UniProtKB-UniRule"/>
</dbReference>
<dbReference type="GO" id="GO:0006207">
    <property type="term" value="P:'de novo' pyrimidine nucleobase biosynthetic process"/>
    <property type="evidence" value="ECO:0007669"/>
    <property type="project" value="InterPro"/>
</dbReference>
<dbReference type="GO" id="GO:0044205">
    <property type="term" value="P:'de novo' UMP biosynthetic process"/>
    <property type="evidence" value="ECO:0007669"/>
    <property type="project" value="UniProtKB-UniRule"/>
</dbReference>
<dbReference type="CDD" id="cd04725">
    <property type="entry name" value="OMP_decarboxylase_like"/>
    <property type="match status" value="1"/>
</dbReference>
<dbReference type="FunFam" id="3.20.20.70:FF:000015">
    <property type="entry name" value="Orotidine 5'-phosphate decarboxylase"/>
    <property type="match status" value="1"/>
</dbReference>
<dbReference type="Gene3D" id="3.20.20.70">
    <property type="entry name" value="Aldolase class I"/>
    <property type="match status" value="1"/>
</dbReference>
<dbReference type="HAMAP" id="MF_01200_B">
    <property type="entry name" value="OMPdecase_type1_B"/>
    <property type="match status" value="1"/>
</dbReference>
<dbReference type="InterPro" id="IPR013785">
    <property type="entry name" value="Aldolase_TIM"/>
</dbReference>
<dbReference type="InterPro" id="IPR014732">
    <property type="entry name" value="OMPdecase"/>
</dbReference>
<dbReference type="InterPro" id="IPR018089">
    <property type="entry name" value="OMPdecase_AS"/>
</dbReference>
<dbReference type="InterPro" id="IPR047596">
    <property type="entry name" value="OMPdecase_bac"/>
</dbReference>
<dbReference type="InterPro" id="IPR001754">
    <property type="entry name" value="OMPdeCOase_dom"/>
</dbReference>
<dbReference type="InterPro" id="IPR011060">
    <property type="entry name" value="RibuloseP-bd_barrel"/>
</dbReference>
<dbReference type="NCBIfam" id="NF001273">
    <property type="entry name" value="PRK00230.1"/>
    <property type="match status" value="1"/>
</dbReference>
<dbReference type="NCBIfam" id="TIGR01740">
    <property type="entry name" value="pyrF"/>
    <property type="match status" value="1"/>
</dbReference>
<dbReference type="PANTHER" id="PTHR32119">
    <property type="entry name" value="OROTIDINE 5'-PHOSPHATE DECARBOXYLASE"/>
    <property type="match status" value="1"/>
</dbReference>
<dbReference type="PANTHER" id="PTHR32119:SF2">
    <property type="entry name" value="OROTIDINE 5'-PHOSPHATE DECARBOXYLASE"/>
    <property type="match status" value="1"/>
</dbReference>
<dbReference type="Pfam" id="PF00215">
    <property type="entry name" value="OMPdecase"/>
    <property type="match status" value="1"/>
</dbReference>
<dbReference type="SMART" id="SM00934">
    <property type="entry name" value="OMPdecase"/>
    <property type="match status" value="1"/>
</dbReference>
<dbReference type="SUPFAM" id="SSF51366">
    <property type="entry name" value="Ribulose-phoshate binding barrel"/>
    <property type="match status" value="1"/>
</dbReference>
<dbReference type="PROSITE" id="PS00156">
    <property type="entry name" value="OMPDECASE"/>
    <property type="match status" value="1"/>
</dbReference>
<organism>
    <name type="scientific">Staphylococcus aureus (strain Mu50 / ATCC 700699)</name>
    <dbReference type="NCBI Taxonomy" id="158878"/>
    <lineage>
        <taxon>Bacteria</taxon>
        <taxon>Bacillati</taxon>
        <taxon>Bacillota</taxon>
        <taxon>Bacilli</taxon>
        <taxon>Bacillales</taxon>
        <taxon>Staphylococcaceae</taxon>
        <taxon>Staphylococcus</taxon>
    </lineage>
</organism>
<name>PYRF_STAAM</name>
<proteinExistence type="inferred from homology"/>
<protein>
    <recommendedName>
        <fullName evidence="1">Orotidine 5'-phosphate decarboxylase</fullName>
        <ecNumber evidence="1">4.1.1.23</ecNumber>
    </recommendedName>
    <alternativeName>
        <fullName evidence="1">OMP decarboxylase</fullName>
        <shortName evidence="1">OMPDCase</shortName>
        <shortName evidence="1">OMPdecase</shortName>
    </alternativeName>
</protein>